<protein>
    <recommendedName>
        <fullName evidence="1">Leucine--tRNA ligase</fullName>
        <ecNumber evidence="1">6.1.1.4</ecNumber>
    </recommendedName>
    <alternativeName>
        <fullName evidence="1">Leucyl-tRNA synthetase</fullName>
        <shortName evidence="1">LeuRS</shortName>
    </alternativeName>
</protein>
<evidence type="ECO:0000255" key="1">
    <source>
        <dbReference type="HAMAP-Rule" id="MF_00049"/>
    </source>
</evidence>
<name>SYL_UREP2</name>
<comment type="catalytic activity">
    <reaction evidence="1">
        <text>tRNA(Leu) + L-leucine + ATP = L-leucyl-tRNA(Leu) + AMP + diphosphate</text>
        <dbReference type="Rhea" id="RHEA:11688"/>
        <dbReference type="Rhea" id="RHEA-COMP:9613"/>
        <dbReference type="Rhea" id="RHEA-COMP:9622"/>
        <dbReference type="ChEBI" id="CHEBI:30616"/>
        <dbReference type="ChEBI" id="CHEBI:33019"/>
        <dbReference type="ChEBI" id="CHEBI:57427"/>
        <dbReference type="ChEBI" id="CHEBI:78442"/>
        <dbReference type="ChEBI" id="CHEBI:78494"/>
        <dbReference type="ChEBI" id="CHEBI:456215"/>
        <dbReference type="EC" id="6.1.1.4"/>
    </reaction>
</comment>
<comment type="subcellular location">
    <subcellularLocation>
        <location evidence="1">Cytoplasm</location>
    </subcellularLocation>
</comment>
<comment type="similarity">
    <text evidence="1">Belongs to the class-I aminoacyl-tRNA synthetase family.</text>
</comment>
<reference key="1">
    <citation type="submission" date="2008-02" db="EMBL/GenBank/DDBJ databases">
        <title>Genome sequence of Ureaplasma parvum serovar 3.</title>
        <authorList>
            <person name="Methe B.A."/>
            <person name="Glass J."/>
            <person name="Waites K."/>
            <person name="Shrivastava S."/>
        </authorList>
    </citation>
    <scope>NUCLEOTIDE SEQUENCE [LARGE SCALE GENOMIC DNA]</scope>
    <source>
        <strain>ATCC 27815 / 27 / NCTC 11736</strain>
    </source>
</reference>
<feature type="chain" id="PRO_1000074849" description="Leucine--tRNA ligase">
    <location>
        <begin position="1"/>
        <end position="806"/>
    </location>
</feature>
<feature type="short sequence motif" description="'HIGH' region">
    <location>
        <begin position="40"/>
        <end position="51"/>
    </location>
</feature>
<feature type="short sequence motif" description="'KMSKS' region">
    <location>
        <begin position="580"/>
        <end position="584"/>
    </location>
</feature>
<feature type="binding site" evidence="1">
    <location>
        <position position="583"/>
    </location>
    <ligand>
        <name>ATP</name>
        <dbReference type="ChEBI" id="CHEBI:30616"/>
    </ligand>
</feature>
<accession>B1AJ10</accession>
<keyword id="KW-0030">Aminoacyl-tRNA synthetase</keyword>
<keyword id="KW-0067">ATP-binding</keyword>
<keyword id="KW-0963">Cytoplasm</keyword>
<keyword id="KW-0436">Ligase</keyword>
<keyword id="KW-0547">Nucleotide-binding</keyword>
<keyword id="KW-0648">Protein biosynthesis</keyword>
<sequence>MYNHNKIEKKWQKYWLDNKTFKFVDNPNNPKKFYVLDMFPYPSGKGLHVGHPKGYTATDVISRFKRLNGYDVLHPIGWDAFGLPAEQYALETNNHPHTFTQQNIKIFRKQLQMIGFDFDYDKEVDTTDPQFYQWTQWIFVQLYKHNLAEIQDIDVNWCENLGTVLSNEEVVLNDKNERVSERGGHPVVRKPMKQWVLKIVDYADKLLDGLNEVEFSESLKSLQRNWIGKSIGTSVQFKIKDSLLTLDVFTTRIDTIYGVQYLVVAPEHPILKSITSEQQINVVQSYIEQTKKISDLDRIADTNKTGVFSGAYAINPINQEIIPIWVSDYVLMNFATGAVMGVPAHDERDYAFAKKYALPIKSVIDTKQKLPYAGDGLHINSAMINGLNIKQSQNVLNDYLIKNHLGKKVANYKLRNWIFSRQRYWGEPFPVLFDENNQIKIIEDLPVLLPNLNEFKPSKTGESPLANAQEWLYVEIDGKKYRRETNTMPQWAGSSWYFLAYILKNEDGSYTPLNSEEAKKRFAKWLPVDVYIGGQEHAVLHLLYSRFWHRFLYDIGVVPTKEPFYKVINQGMILGENNEKMSKSKGNVINPDDIIASHGADTLRIYEMFMGPLTASLPWNPDGLDAMRKWLDRVYRLYHNLSELEVVEDLNKLNEEIIIAYHTLIKNYTKAINEQAFNIAISEMMVFVNVLYKNKVINYELLDNFLILLSCYAPHLAEELYSLNHSESVCLQKMPIYDEQKIIAQNITIPIQINGKLKHTINVLRDTNAEELVNLALACEQVKQEIGDQPIKKQIVVVNKIINFVI</sequence>
<organism>
    <name type="scientific">Ureaplasma parvum serovar 3 (strain ATCC 27815 / 27 / NCTC 11736)</name>
    <dbReference type="NCBI Taxonomy" id="505682"/>
    <lineage>
        <taxon>Bacteria</taxon>
        <taxon>Bacillati</taxon>
        <taxon>Mycoplasmatota</taxon>
        <taxon>Mycoplasmoidales</taxon>
        <taxon>Mycoplasmoidaceae</taxon>
        <taxon>Ureaplasma</taxon>
    </lineage>
</organism>
<gene>
    <name evidence="1" type="primary">leuS</name>
    <name type="ordered locus">UPA3_0387</name>
</gene>
<dbReference type="EC" id="6.1.1.4" evidence="1"/>
<dbReference type="EMBL" id="CP000942">
    <property type="protein sequence ID" value="ACA33294.1"/>
    <property type="molecule type" value="Genomic_DNA"/>
</dbReference>
<dbReference type="RefSeq" id="WP_010891746.1">
    <property type="nucleotide sequence ID" value="NC_010503.1"/>
</dbReference>
<dbReference type="SMR" id="B1AJ10"/>
<dbReference type="GeneID" id="29672253"/>
<dbReference type="KEGG" id="upa:UPA3_0387"/>
<dbReference type="HOGENOM" id="CLU_004427_0_0_14"/>
<dbReference type="Proteomes" id="UP000002162">
    <property type="component" value="Chromosome"/>
</dbReference>
<dbReference type="GO" id="GO:0005829">
    <property type="term" value="C:cytosol"/>
    <property type="evidence" value="ECO:0007669"/>
    <property type="project" value="TreeGrafter"/>
</dbReference>
<dbReference type="GO" id="GO:0002161">
    <property type="term" value="F:aminoacyl-tRNA deacylase activity"/>
    <property type="evidence" value="ECO:0007669"/>
    <property type="project" value="InterPro"/>
</dbReference>
<dbReference type="GO" id="GO:0005524">
    <property type="term" value="F:ATP binding"/>
    <property type="evidence" value="ECO:0007669"/>
    <property type="project" value="UniProtKB-UniRule"/>
</dbReference>
<dbReference type="GO" id="GO:0004823">
    <property type="term" value="F:leucine-tRNA ligase activity"/>
    <property type="evidence" value="ECO:0007669"/>
    <property type="project" value="UniProtKB-UniRule"/>
</dbReference>
<dbReference type="GO" id="GO:0006429">
    <property type="term" value="P:leucyl-tRNA aminoacylation"/>
    <property type="evidence" value="ECO:0007669"/>
    <property type="project" value="UniProtKB-UniRule"/>
</dbReference>
<dbReference type="CDD" id="cd07958">
    <property type="entry name" value="Anticodon_Ia_Leu_BEm"/>
    <property type="match status" value="1"/>
</dbReference>
<dbReference type="CDD" id="cd00812">
    <property type="entry name" value="LeuRS_core"/>
    <property type="match status" value="1"/>
</dbReference>
<dbReference type="FunFam" id="1.10.730.10:FF:000002">
    <property type="entry name" value="Leucine--tRNA ligase"/>
    <property type="match status" value="1"/>
</dbReference>
<dbReference type="FunFam" id="3.40.50.620:FF:000056">
    <property type="entry name" value="Leucine--tRNA ligase"/>
    <property type="match status" value="1"/>
</dbReference>
<dbReference type="FunFam" id="3.40.50.620:FF:000077">
    <property type="entry name" value="Leucine--tRNA ligase"/>
    <property type="match status" value="1"/>
</dbReference>
<dbReference type="Gene3D" id="3.10.20.590">
    <property type="match status" value="1"/>
</dbReference>
<dbReference type="Gene3D" id="3.40.50.620">
    <property type="entry name" value="HUPs"/>
    <property type="match status" value="2"/>
</dbReference>
<dbReference type="Gene3D" id="1.10.730.10">
    <property type="entry name" value="Isoleucyl-tRNA Synthetase, Domain 1"/>
    <property type="match status" value="1"/>
</dbReference>
<dbReference type="HAMAP" id="MF_00049_B">
    <property type="entry name" value="Leu_tRNA_synth_B"/>
    <property type="match status" value="1"/>
</dbReference>
<dbReference type="InterPro" id="IPR001412">
    <property type="entry name" value="aa-tRNA-synth_I_CS"/>
</dbReference>
<dbReference type="InterPro" id="IPR002302">
    <property type="entry name" value="Leu-tRNA-ligase"/>
</dbReference>
<dbReference type="InterPro" id="IPR025709">
    <property type="entry name" value="Leu_tRNA-synth_edit"/>
</dbReference>
<dbReference type="InterPro" id="IPR013155">
    <property type="entry name" value="M/V/L/I-tRNA-synth_anticd-bd"/>
</dbReference>
<dbReference type="InterPro" id="IPR015413">
    <property type="entry name" value="Methionyl/Leucyl_tRNA_Synth"/>
</dbReference>
<dbReference type="InterPro" id="IPR014729">
    <property type="entry name" value="Rossmann-like_a/b/a_fold"/>
</dbReference>
<dbReference type="InterPro" id="IPR009080">
    <property type="entry name" value="tRNAsynth_Ia_anticodon-bd"/>
</dbReference>
<dbReference type="InterPro" id="IPR009008">
    <property type="entry name" value="Val/Leu/Ile-tRNA-synth_edit"/>
</dbReference>
<dbReference type="NCBIfam" id="TIGR00396">
    <property type="entry name" value="leuS_bact"/>
    <property type="match status" value="1"/>
</dbReference>
<dbReference type="PANTHER" id="PTHR43740:SF2">
    <property type="entry name" value="LEUCINE--TRNA LIGASE, MITOCHONDRIAL"/>
    <property type="match status" value="1"/>
</dbReference>
<dbReference type="PANTHER" id="PTHR43740">
    <property type="entry name" value="LEUCYL-TRNA SYNTHETASE"/>
    <property type="match status" value="1"/>
</dbReference>
<dbReference type="Pfam" id="PF08264">
    <property type="entry name" value="Anticodon_1"/>
    <property type="match status" value="1"/>
</dbReference>
<dbReference type="Pfam" id="PF13603">
    <property type="entry name" value="tRNA-synt_1_2"/>
    <property type="match status" value="1"/>
</dbReference>
<dbReference type="Pfam" id="PF09334">
    <property type="entry name" value="tRNA-synt_1g"/>
    <property type="match status" value="2"/>
</dbReference>
<dbReference type="PRINTS" id="PR00985">
    <property type="entry name" value="TRNASYNTHLEU"/>
</dbReference>
<dbReference type="SUPFAM" id="SSF47323">
    <property type="entry name" value="Anticodon-binding domain of a subclass of class I aminoacyl-tRNA synthetases"/>
    <property type="match status" value="1"/>
</dbReference>
<dbReference type="SUPFAM" id="SSF52374">
    <property type="entry name" value="Nucleotidylyl transferase"/>
    <property type="match status" value="1"/>
</dbReference>
<dbReference type="SUPFAM" id="SSF50677">
    <property type="entry name" value="ValRS/IleRS/LeuRS editing domain"/>
    <property type="match status" value="1"/>
</dbReference>
<dbReference type="PROSITE" id="PS00178">
    <property type="entry name" value="AA_TRNA_LIGASE_I"/>
    <property type="match status" value="1"/>
</dbReference>
<proteinExistence type="inferred from homology"/>